<organism>
    <name type="scientific">Oenothera biennis</name>
    <name type="common">German evening primrose</name>
    <name type="synonym">Onagra biennis</name>
    <dbReference type="NCBI Taxonomy" id="3942"/>
    <lineage>
        <taxon>Eukaryota</taxon>
        <taxon>Viridiplantae</taxon>
        <taxon>Streptophyta</taxon>
        <taxon>Embryophyta</taxon>
        <taxon>Tracheophyta</taxon>
        <taxon>Spermatophyta</taxon>
        <taxon>Magnoliopsida</taxon>
        <taxon>eudicotyledons</taxon>
        <taxon>Gunneridae</taxon>
        <taxon>Pentapetalae</taxon>
        <taxon>rosids</taxon>
        <taxon>malvids</taxon>
        <taxon>Myrtales</taxon>
        <taxon>Onagraceae</taxon>
        <taxon>Onagroideae</taxon>
        <taxon>Onagreae</taxon>
        <taxon>Oenothera</taxon>
    </lineage>
</organism>
<reference key="1">
    <citation type="journal article" date="2008" name="Nucleic Acids Res.">
        <title>The complete nucleotide sequences of the five genetically distinct plastid genomes of Oenothera, subsection Oenothera: I. Sequence evaluation and plastome evolution.</title>
        <authorList>
            <person name="Greiner S."/>
            <person name="Wang X."/>
            <person name="Rauwolf U."/>
            <person name="Silber M.V."/>
            <person name="Mayer K."/>
            <person name="Meurer J."/>
            <person name="Haberer G."/>
            <person name="Herrmann R.G."/>
        </authorList>
    </citation>
    <scope>NUCLEOTIDE SEQUENCE [LARGE SCALE GENOMIC DNA]</scope>
    <source>
        <strain>cv. Suaveolens Grado</strain>
    </source>
</reference>
<evidence type="ECO:0000255" key="1">
    <source>
        <dbReference type="HAMAP-Rule" id="MF_01342"/>
    </source>
</evidence>
<evidence type="ECO:0000305" key="2"/>
<protein>
    <recommendedName>
        <fullName evidence="1">Large ribosomal subunit protein uL16c</fullName>
    </recommendedName>
    <alternativeName>
        <fullName evidence="2">50S ribosomal protein L16, chloroplastic</fullName>
    </alternativeName>
</protein>
<feature type="chain" id="PRO_0000354651" description="Large ribosomal subunit protein uL16c">
    <location>
        <begin position="1"/>
        <end position="135"/>
    </location>
</feature>
<sequence>MLSPKRTRFRKQHRGRMRGISYRGNRICFGKYALQALEPAWITSRQIEAGRRAMTRNVRRGGKTWVRIFPDKPVTLRAAETRMGSGKGNPEYWVAVVKPGRILYEMGGVAENIARKAISIAASKMPIRTQFIISG</sequence>
<gene>
    <name evidence="1" type="primary">rpl16</name>
</gene>
<proteinExistence type="inferred from homology"/>
<comment type="subunit">
    <text evidence="1">Part of the 50S ribosomal subunit.</text>
</comment>
<comment type="subcellular location">
    <subcellularLocation>
        <location>Plastid</location>
        <location>Chloroplast</location>
    </subcellularLocation>
</comment>
<comment type="similarity">
    <text evidence="1">Belongs to the universal ribosomal protein uL16 family.</text>
</comment>
<name>RK16_OENBI</name>
<geneLocation type="chloroplast"/>
<accession>B0Z4Z7</accession>
<dbReference type="EMBL" id="EU262889">
    <property type="protein sequence ID" value="ABW98909.1"/>
    <property type="molecule type" value="Genomic_DNA"/>
</dbReference>
<dbReference type="RefSeq" id="YP_001687404.1">
    <property type="nucleotide sequence ID" value="NC_010361.1"/>
</dbReference>
<dbReference type="SMR" id="B0Z4Z7"/>
<dbReference type="GeneID" id="5952040"/>
<dbReference type="GO" id="GO:0009507">
    <property type="term" value="C:chloroplast"/>
    <property type="evidence" value="ECO:0007669"/>
    <property type="project" value="UniProtKB-SubCell"/>
</dbReference>
<dbReference type="GO" id="GO:0005762">
    <property type="term" value="C:mitochondrial large ribosomal subunit"/>
    <property type="evidence" value="ECO:0007669"/>
    <property type="project" value="TreeGrafter"/>
</dbReference>
<dbReference type="GO" id="GO:0019843">
    <property type="term" value="F:rRNA binding"/>
    <property type="evidence" value="ECO:0007669"/>
    <property type="project" value="InterPro"/>
</dbReference>
<dbReference type="GO" id="GO:0003735">
    <property type="term" value="F:structural constituent of ribosome"/>
    <property type="evidence" value="ECO:0007669"/>
    <property type="project" value="InterPro"/>
</dbReference>
<dbReference type="GO" id="GO:0032543">
    <property type="term" value="P:mitochondrial translation"/>
    <property type="evidence" value="ECO:0007669"/>
    <property type="project" value="TreeGrafter"/>
</dbReference>
<dbReference type="CDD" id="cd01433">
    <property type="entry name" value="Ribosomal_L16_L10e"/>
    <property type="match status" value="1"/>
</dbReference>
<dbReference type="FunFam" id="3.90.1170.10:FF:000001">
    <property type="entry name" value="50S ribosomal protein L16"/>
    <property type="match status" value="1"/>
</dbReference>
<dbReference type="Gene3D" id="3.90.1170.10">
    <property type="entry name" value="Ribosomal protein L10e/L16"/>
    <property type="match status" value="1"/>
</dbReference>
<dbReference type="HAMAP" id="MF_01342">
    <property type="entry name" value="Ribosomal_uL16"/>
    <property type="match status" value="1"/>
</dbReference>
<dbReference type="InterPro" id="IPR047873">
    <property type="entry name" value="Ribosomal_uL16"/>
</dbReference>
<dbReference type="InterPro" id="IPR000114">
    <property type="entry name" value="Ribosomal_uL16_bact-type"/>
</dbReference>
<dbReference type="InterPro" id="IPR020798">
    <property type="entry name" value="Ribosomal_uL16_CS"/>
</dbReference>
<dbReference type="InterPro" id="IPR016180">
    <property type="entry name" value="Ribosomal_uL16_dom"/>
</dbReference>
<dbReference type="InterPro" id="IPR036920">
    <property type="entry name" value="Ribosomal_uL16_sf"/>
</dbReference>
<dbReference type="NCBIfam" id="TIGR01164">
    <property type="entry name" value="rplP_bact"/>
    <property type="match status" value="1"/>
</dbReference>
<dbReference type="PANTHER" id="PTHR12220">
    <property type="entry name" value="50S/60S RIBOSOMAL PROTEIN L16"/>
    <property type="match status" value="1"/>
</dbReference>
<dbReference type="PANTHER" id="PTHR12220:SF13">
    <property type="entry name" value="LARGE RIBOSOMAL SUBUNIT PROTEIN UL16M"/>
    <property type="match status" value="1"/>
</dbReference>
<dbReference type="Pfam" id="PF00252">
    <property type="entry name" value="Ribosomal_L16"/>
    <property type="match status" value="1"/>
</dbReference>
<dbReference type="PRINTS" id="PR00060">
    <property type="entry name" value="RIBOSOMALL16"/>
</dbReference>
<dbReference type="SUPFAM" id="SSF54686">
    <property type="entry name" value="Ribosomal protein L16p/L10e"/>
    <property type="match status" value="1"/>
</dbReference>
<dbReference type="PROSITE" id="PS00701">
    <property type="entry name" value="RIBOSOMAL_L16_2"/>
    <property type="match status" value="1"/>
</dbReference>
<keyword id="KW-0150">Chloroplast</keyword>
<keyword id="KW-0934">Plastid</keyword>
<keyword id="KW-0687">Ribonucleoprotein</keyword>
<keyword id="KW-0689">Ribosomal protein</keyword>